<sequence length="957" mass="104391">MTQTLSQLENSGAFIERHIGPDAAQQQEMLNAVGAQSLNALTGQIVPKDIQLATPPQVGAPATEYAALAELKAIASRNKRFTSYIGMGYTAVQLPPVILRNMLENPGWYTAYTPYQPEVSQGRLEALLNFQQVTLDLTGLDMASASLLDEATAAAEAMAMAKRVSKLKNANRFFVASDVHPQTLDVVRTRAETFGFEVIVDDAQKVLDHQDVFGVLLQQVGTTGEIHDYTALISELKSRKIVVSVAADIMALVLLTAPGKQGADIVFGSAQRFGVPMGYGGPHAAFFAAKDEYKRSMPGRIIGVSKDAAGNTALRMAMQTREQHIRREKANSNICTSQVLLANIASLYAVYHGPVGLKRIANRIHRLTDILAAGLQQKGLKLRHAHYFDTLCVEVADKAGVLARAEAAEINLRSDILNAVGITLDETTTRENVMQLFSVLLGDNHGLEIDTLDKDVAHDSRSIQPAMLRDDEILTHPVFNRYHSETEMMRYMHSLERKDLALNQAMIPLGSCTMKLNAAAEMIPITWQEFAELHPFCPPEQAEGYQQMIAQLADWLVKLTGYDAVCMQPNSGAQGEYAGLLAIRHYHESRNEGHRDICLIPASAHGTNPASAHMAGMQVVVVACDKNGNIDLTDLRAKAEQAGDNLSCIMVTYPSTHGVYEETIREVCEVVHQFGGQVYLDGANMNAQVGITSPGFIGADVSHLNLHKTFCIPHGGGGPGMGPIGVKAHLAPFVPGHSVVQIEGMLTRQGAVSAAPFGSASILPISWMYIRMMGAEGLKKASQVAILNANYIASRLQDAFPVLYTGRDGRVAHECILDIRPLKEETGISELDIAKRLIDYGFHAPTMSFPVAGTLMVEPTESESKVELDRFIDAMLAIRAEIDQVKAGVWPLEDNPLVNAPHIQNELVAEWAHPYSREVAVFPAGVADKYWPTVKRLDDVYGDRNLFCSCVPISEYQ</sequence>
<comment type="function">
    <text evidence="1">The glycine cleavage system catalyzes the degradation of glycine. The P protein binds the alpha-amino group of glycine through its pyridoxal phosphate cofactor; CO(2) is released and the remaining methylamine moiety is then transferred to the lipoamide cofactor of the H protein.</text>
</comment>
<comment type="catalytic activity">
    <reaction evidence="1">
        <text>N(6)-[(R)-lipoyl]-L-lysyl-[glycine-cleavage complex H protein] + glycine + H(+) = N(6)-[(R)-S(8)-aminomethyldihydrolipoyl]-L-lysyl-[glycine-cleavage complex H protein] + CO2</text>
        <dbReference type="Rhea" id="RHEA:24304"/>
        <dbReference type="Rhea" id="RHEA-COMP:10494"/>
        <dbReference type="Rhea" id="RHEA-COMP:10495"/>
        <dbReference type="ChEBI" id="CHEBI:15378"/>
        <dbReference type="ChEBI" id="CHEBI:16526"/>
        <dbReference type="ChEBI" id="CHEBI:57305"/>
        <dbReference type="ChEBI" id="CHEBI:83099"/>
        <dbReference type="ChEBI" id="CHEBI:83143"/>
        <dbReference type="EC" id="1.4.4.2"/>
    </reaction>
</comment>
<comment type="cofactor">
    <cofactor evidence="1">
        <name>pyridoxal 5'-phosphate</name>
        <dbReference type="ChEBI" id="CHEBI:597326"/>
    </cofactor>
</comment>
<comment type="subunit">
    <text evidence="1">The glycine cleavage system is composed of four proteins: P, T, L and H.</text>
</comment>
<comment type="similarity">
    <text evidence="1">Belongs to the GcvP family.</text>
</comment>
<keyword id="KW-0560">Oxidoreductase</keyword>
<keyword id="KW-0663">Pyridoxal phosphate</keyword>
<keyword id="KW-1185">Reference proteome</keyword>
<dbReference type="EC" id="1.4.4.2" evidence="1"/>
<dbReference type="EMBL" id="CP000800">
    <property type="protein sequence ID" value="ABV16866.1"/>
    <property type="molecule type" value="Genomic_DNA"/>
</dbReference>
<dbReference type="RefSeq" id="WP_000195058.1">
    <property type="nucleotide sequence ID" value="NC_009801.1"/>
</dbReference>
<dbReference type="SMR" id="A7ZR12"/>
<dbReference type="KEGG" id="ecw:EcE24377A_3230"/>
<dbReference type="HOGENOM" id="CLU_004620_1_1_6"/>
<dbReference type="Proteomes" id="UP000001122">
    <property type="component" value="Chromosome"/>
</dbReference>
<dbReference type="GO" id="GO:0005829">
    <property type="term" value="C:cytosol"/>
    <property type="evidence" value="ECO:0007669"/>
    <property type="project" value="TreeGrafter"/>
</dbReference>
<dbReference type="GO" id="GO:0005960">
    <property type="term" value="C:glycine cleavage complex"/>
    <property type="evidence" value="ECO:0007669"/>
    <property type="project" value="TreeGrafter"/>
</dbReference>
<dbReference type="GO" id="GO:0016594">
    <property type="term" value="F:glycine binding"/>
    <property type="evidence" value="ECO:0007669"/>
    <property type="project" value="TreeGrafter"/>
</dbReference>
<dbReference type="GO" id="GO:0004375">
    <property type="term" value="F:glycine dehydrogenase (decarboxylating) activity"/>
    <property type="evidence" value="ECO:0007669"/>
    <property type="project" value="UniProtKB-EC"/>
</dbReference>
<dbReference type="GO" id="GO:0030170">
    <property type="term" value="F:pyridoxal phosphate binding"/>
    <property type="evidence" value="ECO:0007669"/>
    <property type="project" value="TreeGrafter"/>
</dbReference>
<dbReference type="GO" id="GO:0019464">
    <property type="term" value="P:glycine decarboxylation via glycine cleavage system"/>
    <property type="evidence" value="ECO:0007669"/>
    <property type="project" value="UniProtKB-UniRule"/>
</dbReference>
<dbReference type="CDD" id="cd00613">
    <property type="entry name" value="GDC-P"/>
    <property type="match status" value="2"/>
</dbReference>
<dbReference type="FunFam" id="3.40.640.10:FF:000005">
    <property type="entry name" value="Glycine dehydrogenase (decarboxylating), mitochondrial"/>
    <property type="match status" value="1"/>
</dbReference>
<dbReference type="FunFam" id="3.90.1150.10:FF:000007">
    <property type="entry name" value="Glycine dehydrogenase (decarboxylating), mitochondrial"/>
    <property type="match status" value="1"/>
</dbReference>
<dbReference type="FunFam" id="3.40.640.10:FF:000007">
    <property type="entry name" value="glycine dehydrogenase (Decarboxylating), mitochondrial"/>
    <property type="match status" value="1"/>
</dbReference>
<dbReference type="Gene3D" id="3.90.1150.10">
    <property type="entry name" value="Aspartate Aminotransferase, domain 1"/>
    <property type="match status" value="1"/>
</dbReference>
<dbReference type="Gene3D" id="3.40.640.10">
    <property type="entry name" value="Type I PLP-dependent aspartate aminotransferase-like (Major domain)"/>
    <property type="match status" value="2"/>
</dbReference>
<dbReference type="HAMAP" id="MF_00711">
    <property type="entry name" value="GcvP"/>
    <property type="match status" value="1"/>
</dbReference>
<dbReference type="InterPro" id="IPR003437">
    <property type="entry name" value="GcvP"/>
</dbReference>
<dbReference type="InterPro" id="IPR049316">
    <property type="entry name" value="GDC-P_C"/>
</dbReference>
<dbReference type="InterPro" id="IPR049315">
    <property type="entry name" value="GDC-P_N"/>
</dbReference>
<dbReference type="InterPro" id="IPR020581">
    <property type="entry name" value="GDC_P"/>
</dbReference>
<dbReference type="InterPro" id="IPR015424">
    <property type="entry name" value="PyrdxlP-dep_Trfase"/>
</dbReference>
<dbReference type="InterPro" id="IPR015421">
    <property type="entry name" value="PyrdxlP-dep_Trfase_major"/>
</dbReference>
<dbReference type="InterPro" id="IPR015422">
    <property type="entry name" value="PyrdxlP-dep_Trfase_small"/>
</dbReference>
<dbReference type="NCBIfam" id="TIGR00461">
    <property type="entry name" value="gcvP"/>
    <property type="match status" value="1"/>
</dbReference>
<dbReference type="NCBIfam" id="NF003346">
    <property type="entry name" value="PRK04366.1"/>
    <property type="match status" value="1"/>
</dbReference>
<dbReference type="PANTHER" id="PTHR11773:SF13">
    <property type="entry name" value="GLYCINE DEHYDROGENASE (DECARBOXYLATING)"/>
    <property type="match status" value="1"/>
</dbReference>
<dbReference type="PANTHER" id="PTHR11773">
    <property type="entry name" value="GLYCINE DEHYDROGENASE, DECARBOXYLATING"/>
    <property type="match status" value="1"/>
</dbReference>
<dbReference type="Pfam" id="PF21478">
    <property type="entry name" value="GcvP2_C"/>
    <property type="match status" value="1"/>
</dbReference>
<dbReference type="Pfam" id="PF02347">
    <property type="entry name" value="GDC-P"/>
    <property type="match status" value="2"/>
</dbReference>
<dbReference type="SUPFAM" id="SSF53383">
    <property type="entry name" value="PLP-dependent transferases"/>
    <property type="match status" value="2"/>
</dbReference>
<organism>
    <name type="scientific">Escherichia coli O139:H28 (strain E24377A / ETEC)</name>
    <dbReference type="NCBI Taxonomy" id="331111"/>
    <lineage>
        <taxon>Bacteria</taxon>
        <taxon>Pseudomonadati</taxon>
        <taxon>Pseudomonadota</taxon>
        <taxon>Gammaproteobacteria</taxon>
        <taxon>Enterobacterales</taxon>
        <taxon>Enterobacteriaceae</taxon>
        <taxon>Escherichia</taxon>
    </lineage>
</organism>
<evidence type="ECO:0000255" key="1">
    <source>
        <dbReference type="HAMAP-Rule" id="MF_00711"/>
    </source>
</evidence>
<feature type="chain" id="PRO_1000062074" description="Glycine dehydrogenase (decarboxylating)">
    <location>
        <begin position="1"/>
        <end position="957"/>
    </location>
</feature>
<feature type="modified residue" description="N6-(pyridoxal phosphate)lysine" evidence="1">
    <location>
        <position position="708"/>
    </location>
</feature>
<proteinExistence type="inferred from homology"/>
<name>GCSP_ECO24</name>
<accession>A7ZR12</accession>
<protein>
    <recommendedName>
        <fullName evidence="1">Glycine dehydrogenase (decarboxylating)</fullName>
        <ecNumber evidence="1">1.4.4.2</ecNumber>
    </recommendedName>
    <alternativeName>
        <fullName evidence="1">Glycine cleavage system P-protein</fullName>
    </alternativeName>
    <alternativeName>
        <fullName evidence="1">Glycine decarboxylase</fullName>
    </alternativeName>
    <alternativeName>
        <fullName evidence="1">Glycine dehydrogenase (aminomethyl-transferring)</fullName>
    </alternativeName>
</protein>
<reference key="1">
    <citation type="journal article" date="2008" name="J. Bacteriol.">
        <title>The pangenome structure of Escherichia coli: comparative genomic analysis of E. coli commensal and pathogenic isolates.</title>
        <authorList>
            <person name="Rasko D.A."/>
            <person name="Rosovitz M.J."/>
            <person name="Myers G.S.A."/>
            <person name="Mongodin E.F."/>
            <person name="Fricke W.F."/>
            <person name="Gajer P."/>
            <person name="Crabtree J."/>
            <person name="Sebaihia M."/>
            <person name="Thomson N.R."/>
            <person name="Chaudhuri R."/>
            <person name="Henderson I.R."/>
            <person name="Sperandio V."/>
            <person name="Ravel J."/>
        </authorList>
    </citation>
    <scope>NUCLEOTIDE SEQUENCE [LARGE SCALE GENOMIC DNA]</scope>
    <source>
        <strain>E24377A / ETEC</strain>
    </source>
</reference>
<gene>
    <name evidence="1" type="primary">gcvP</name>
    <name type="ordered locus">EcE24377A_3230</name>
</gene>